<protein>
    <recommendedName>
        <fullName>Protein DSE1</fullName>
    </recommendedName>
    <alternativeName>
        <fullName>Daughter-specific expression protein 1</fullName>
    </alternativeName>
</protein>
<comment type="function">
    <text evidence="1">Involved in cell wall metabolism and required for the separation of the mother and daughter cells.</text>
</comment>
<comment type="similarity">
    <text evidence="2">Belongs to the WD repeat DSE1 family.</text>
</comment>
<dbReference type="EMBL" id="CR380957">
    <property type="protein sequence ID" value="CAG61285.1"/>
    <property type="molecule type" value="Genomic_DNA"/>
</dbReference>
<dbReference type="RefSeq" id="XP_448324.1">
    <property type="nucleotide sequence ID" value="XM_448324.1"/>
</dbReference>
<dbReference type="SMR" id="Q6FN70"/>
<dbReference type="FunCoup" id="Q6FN70">
    <property type="interactions" value="49"/>
</dbReference>
<dbReference type="STRING" id="284593.Q6FN70"/>
<dbReference type="EnsemblFungi" id="CAGL0K02277g-T">
    <property type="protein sequence ID" value="CAGL0K02277g-T-p1"/>
    <property type="gene ID" value="CAGL0K02277g"/>
</dbReference>
<dbReference type="KEGG" id="cgr:2890301"/>
<dbReference type="CGD" id="CAL0134215">
    <property type="gene designation" value="CAGL0K02277g"/>
</dbReference>
<dbReference type="VEuPathDB" id="FungiDB:CAGL0K02277g"/>
<dbReference type="eggNOG" id="ENOG502QTST">
    <property type="taxonomic scope" value="Eukaryota"/>
</dbReference>
<dbReference type="HOGENOM" id="CLU_033098_0_0_1"/>
<dbReference type="InParanoid" id="Q6FN70"/>
<dbReference type="OMA" id="VKRFNHR"/>
<dbReference type="Proteomes" id="UP000002428">
    <property type="component" value="Chromosome K"/>
</dbReference>
<dbReference type="GO" id="GO:0031683">
    <property type="term" value="F:G-protein beta/gamma-subunit complex binding"/>
    <property type="evidence" value="ECO:0007669"/>
    <property type="project" value="EnsemblFungi"/>
</dbReference>
<dbReference type="GO" id="GO:0071555">
    <property type="term" value="P:cell wall organization"/>
    <property type="evidence" value="ECO:0007669"/>
    <property type="project" value="UniProtKB-KW"/>
</dbReference>
<dbReference type="GO" id="GO:0001403">
    <property type="term" value="P:invasive growth in response to glucose limitation"/>
    <property type="evidence" value="ECO:0007669"/>
    <property type="project" value="EnsemblFungi"/>
</dbReference>
<dbReference type="GO" id="GO:0010969">
    <property type="term" value="P:regulation of pheromone-dependent signal transduction involved in conjugation with cellular fusion"/>
    <property type="evidence" value="ECO:0007669"/>
    <property type="project" value="EnsemblFungi"/>
</dbReference>
<dbReference type="GO" id="GO:0000920">
    <property type="term" value="P:septum digestion after cytokinesis"/>
    <property type="evidence" value="ECO:0007669"/>
    <property type="project" value="EnsemblFungi"/>
</dbReference>
<dbReference type="Gene3D" id="2.130.10.10">
    <property type="entry name" value="YVTN repeat-like/Quinoprotein amine dehydrogenase"/>
    <property type="match status" value="1"/>
</dbReference>
<dbReference type="InterPro" id="IPR015943">
    <property type="entry name" value="WD40/YVTN_repeat-like_dom_sf"/>
</dbReference>
<dbReference type="InterPro" id="IPR036322">
    <property type="entry name" value="WD40_repeat_dom_sf"/>
</dbReference>
<dbReference type="SUPFAM" id="SSF50978">
    <property type="entry name" value="WD40 repeat-like"/>
    <property type="match status" value="1"/>
</dbReference>
<evidence type="ECO:0000250" key="1"/>
<evidence type="ECO:0000305" key="2"/>
<gene>
    <name type="primary">DSE1</name>
    <name type="ordered locus">CAGL0K02277g</name>
</gene>
<feature type="chain" id="PRO_0000285346" description="Protein DSE1">
    <location>
        <begin position="1"/>
        <end position="567"/>
    </location>
</feature>
<feature type="repeat" description="WD 1">
    <location>
        <begin position="68"/>
        <end position="109"/>
    </location>
</feature>
<feature type="repeat" description="WD 2">
    <location>
        <begin position="127"/>
        <end position="167"/>
    </location>
</feature>
<feature type="repeat" description="WD 3">
    <location>
        <begin position="302"/>
        <end position="341"/>
    </location>
</feature>
<feature type="repeat" description="WD 4">
    <location>
        <begin position="346"/>
        <end position="385"/>
    </location>
</feature>
<feature type="repeat" description="WD 5">
    <location>
        <begin position="398"/>
        <end position="437"/>
    </location>
</feature>
<proteinExistence type="inferred from homology"/>
<reference key="1">
    <citation type="journal article" date="2004" name="Nature">
        <title>Genome evolution in yeasts.</title>
        <authorList>
            <person name="Dujon B."/>
            <person name="Sherman D."/>
            <person name="Fischer G."/>
            <person name="Durrens P."/>
            <person name="Casaregola S."/>
            <person name="Lafontaine I."/>
            <person name="de Montigny J."/>
            <person name="Marck C."/>
            <person name="Neuveglise C."/>
            <person name="Talla E."/>
            <person name="Goffard N."/>
            <person name="Frangeul L."/>
            <person name="Aigle M."/>
            <person name="Anthouard V."/>
            <person name="Babour A."/>
            <person name="Barbe V."/>
            <person name="Barnay S."/>
            <person name="Blanchin S."/>
            <person name="Beckerich J.-M."/>
            <person name="Beyne E."/>
            <person name="Bleykasten C."/>
            <person name="Boisrame A."/>
            <person name="Boyer J."/>
            <person name="Cattolico L."/>
            <person name="Confanioleri F."/>
            <person name="de Daruvar A."/>
            <person name="Despons L."/>
            <person name="Fabre E."/>
            <person name="Fairhead C."/>
            <person name="Ferry-Dumazet H."/>
            <person name="Groppi A."/>
            <person name="Hantraye F."/>
            <person name="Hennequin C."/>
            <person name="Jauniaux N."/>
            <person name="Joyet P."/>
            <person name="Kachouri R."/>
            <person name="Kerrest A."/>
            <person name="Koszul R."/>
            <person name="Lemaire M."/>
            <person name="Lesur I."/>
            <person name="Ma L."/>
            <person name="Muller H."/>
            <person name="Nicaud J.-M."/>
            <person name="Nikolski M."/>
            <person name="Oztas S."/>
            <person name="Ozier-Kalogeropoulos O."/>
            <person name="Pellenz S."/>
            <person name="Potier S."/>
            <person name="Richard G.-F."/>
            <person name="Straub M.-L."/>
            <person name="Suleau A."/>
            <person name="Swennen D."/>
            <person name="Tekaia F."/>
            <person name="Wesolowski-Louvel M."/>
            <person name="Westhof E."/>
            <person name="Wirth B."/>
            <person name="Zeniou-Meyer M."/>
            <person name="Zivanovic Y."/>
            <person name="Bolotin-Fukuhara M."/>
            <person name="Thierry A."/>
            <person name="Bouchier C."/>
            <person name="Caudron B."/>
            <person name="Scarpelli C."/>
            <person name="Gaillardin C."/>
            <person name="Weissenbach J."/>
            <person name="Wincker P."/>
            <person name="Souciet J.-L."/>
        </authorList>
    </citation>
    <scope>NUCLEOTIDE SEQUENCE [LARGE SCALE GENOMIC DNA]</scope>
    <source>
        <strain>ATCC 2001 / BCRC 20586 / JCM 3761 / NBRC 0622 / NRRL Y-65 / CBS 138</strain>
    </source>
</reference>
<accession>Q6FN70</accession>
<keyword id="KW-0131">Cell cycle</keyword>
<keyword id="KW-0132">Cell division</keyword>
<keyword id="KW-0961">Cell wall biogenesis/degradation</keyword>
<keyword id="KW-1185">Reference proteome</keyword>
<keyword id="KW-0677">Repeat</keyword>
<keyword id="KW-0853">WD repeat</keyword>
<name>DSE1_CANGA</name>
<sequence>MTDYYEPINIFRQCAISVKKRGQEHGLDVATRRVASWQRSAKLNSPTLRKVSDDYFLTKKVKSDYWQVSDMDLSATAFSSVGNLVMVTSNKDQDNVKLYTYAEDPNSMRQLQTITVPGAPITTATLLPAAEFNPTAYVPDHEQLLLTGHRDGIVNLISTSFTKGESRIVKRYNHRKHLVSMANEVMNIDTKHKDEIEQLLANHKQKSNSARAMPVRSIKPWNGMGFVSLINDSLFVFTLNNTKTPQYLNSFPGIQSFAIQTHSNPYLLGLTGTHFGANNIALLDLKKTLYIPDPVIDKEYRKSSSRSVSSDCTWISSCYLAQALGKEVNIWDVRRTDGKPKAKILPNKGVIEHLSYHYETDTLFSSDDQGNIIAWDLTNLDRLEYCGLVHGLDAVKYNMNLPINDSNYSQCGNVVVNGNNNSACTYRKLARKIEVNQRAGTLFSYCDHELGLHRLFSAPVEISLQLSDTETINYESEEEEVMVHVDKLHDNSHENSSILHSDSTTLHSRDFDSYSDNESANTTDNDNELAYMDTFKRPVPAFLDEKVAAYNNPVLSSSSSTLAYGYF</sequence>
<organism>
    <name type="scientific">Candida glabrata (strain ATCC 2001 / BCRC 20586 / JCM 3761 / NBRC 0622 / NRRL Y-65 / CBS 138)</name>
    <name type="common">Yeast</name>
    <name type="synonym">Nakaseomyces glabratus</name>
    <dbReference type="NCBI Taxonomy" id="284593"/>
    <lineage>
        <taxon>Eukaryota</taxon>
        <taxon>Fungi</taxon>
        <taxon>Dikarya</taxon>
        <taxon>Ascomycota</taxon>
        <taxon>Saccharomycotina</taxon>
        <taxon>Saccharomycetes</taxon>
        <taxon>Saccharomycetales</taxon>
        <taxon>Saccharomycetaceae</taxon>
        <taxon>Nakaseomyces</taxon>
    </lineage>
</organism>